<dbReference type="EMBL" id="FM211187">
    <property type="protein sequence ID" value="CAR69286.1"/>
    <property type="molecule type" value="Genomic_DNA"/>
</dbReference>
<dbReference type="RefSeq" id="WP_001151785.1">
    <property type="nucleotide sequence ID" value="NC_011900.1"/>
</dbReference>
<dbReference type="SMR" id="B8ZLE1"/>
<dbReference type="GeneID" id="45653220"/>
<dbReference type="KEGG" id="sne:SPN23F15040"/>
<dbReference type="HOGENOM" id="CLU_113441_5_3_9"/>
<dbReference type="GO" id="GO:0005737">
    <property type="term" value="C:cytoplasm"/>
    <property type="evidence" value="ECO:0007669"/>
    <property type="project" value="UniProtKB-ARBA"/>
</dbReference>
<dbReference type="GO" id="GO:1990904">
    <property type="term" value="C:ribonucleoprotein complex"/>
    <property type="evidence" value="ECO:0007669"/>
    <property type="project" value="UniProtKB-KW"/>
</dbReference>
<dbReference type="GO" id="GO:0005840">
    <property type="term" value="C:ribosome"/>
    <property type="evidence" value="ECO:0007669"/>
    <property type="project" value="UniProtKB-KW"/>
</dbReference>
<dbReference type="GO" id="GO:0070181">
    <property type="term" value="F:small ribosomal subunit rRNA binding"/>
    <property type="evidence" value="ECO:0007669"/>
    <property type="project" value="TreeGrafter"/>
</dbReference>
<dbReference type="GO" id="GO:0003735">
    <property type="term" value="F:structural constituent of ribosome"/>
    <property type="evidence" value="ECO:0007669"/>
    <property type="project" value="InterPro"/>
</dbReference>
<dbReference type="GO" id="GO:0006412">
    <property type="term" value="P:translation"/>
    <property type="evidence" value="ECO:0007669"/>
    <property type="project" value="UniProtKB-UniRule"/>
</dbReference>
<dbReference type="CDD" id="cd00473">
    <property type="entry name" value="bS6"/>
    <property type="match status" value="1"/>
</dbReference>
<dbReference type="FunFam" id="3.30.70.60:FF:000002">
    <property type="entry name" value="30S ribosomal protein S6"/>
    <property type="match status" value="1"/>
</dbReference>
<dbReference type="Gene3D" id="3.30.70.60">
    <property type="match status" value="1"/>
</dbReference>
<dbReference type="HAMAP" id="MF_00360">
    <property type="entry name" value="Ribosomal_bS6"/>
    <property type="match status" value="1"/>
</dbReference>
<dbReference type="InterPro" id="IPR000529">
    <property type="entry name" value="Ribosomal_bS6"/>
</dbReference>
<dbReference type="InterPro" id="IPR035980">
    <property type="entry name" value="Ribosomal_bS6_sf"/>
</dbReference>
<dbReference type="InterPro" id="IPR020814">
    <property type="entry name" value="Ribosomal_S6_plastid/chlpt"/>
</dbReference>
<dbReference type="InterPro" id="IPR014717">
    <property type="entry name" value="Transl_elong_EF1B/ribsomal_bS6"/>
</dbReference>
<dbReference type="NCBIfam" id="TIGR00166">
    <property type="entry name" value="S6"/>
    <property type="match status" value="1"/>
</dbReference>
<dbReference type="PANTHER" id="PTHR21011">
    <property type="entry name" value="MITOCHONDRIAL 28S RIBOSOMAL PROTEIN S6"/>
    <property type="match status" value="1"/>
</dbReference>
<dbReference type="PANTHER" id="PTHR21011:SF1">
    <property type="entry name" value="SMALL RIBOSOMAL SUBUNIT PROTEIN BS6M"/>
    <property type="match status" value="1"/>
</dbReference>
<dbReference type="Pfam" id="PF01250">
    <property type="entry name" value="Ribosomal_S6"/>
    <property type="match status" value="1"/>
</dbReference>
<dbReference type="SUPFAM" id="SSF54995">
    <property type="entry name" value="Ribosomal protein S6"/>
    <property type="match status" value="1"/>
</dbReference>
<evidence type="ECO:0000255" key="1">
    <source>
        <dbReference type="HAMAP-Rule" id="MF_00360"/>
    </source>
</evidence>
<evidence type="ECO:0000305" key="2"/>
<accession>B8ZLE1</accession>
<organism>
    <name type="scientific">Streptococcus pneumoniae (strain ATCC 700669 / Spain 23F-1)</name>
    <dbReference type="NCBI Taxonomy" id="561276"/>
    <lineage>
        <taxon>Bacteria</taxon>
        <taxon>Bacillati</taxon>
        <taxon>Bacillota</taxon>
        <taxon>Bacilli</taxon>
        <taxon>Lactobacillales</taxon>
        <taxon>Streptococcaceae</taxon>
        <taxon>Streptococcus</taxon>
    </lineage>
</organism>
<protein>
    <recommendedName>
        <fullName evidence="1">Small ribosomal subunit protein bS6</fullName>
    </recommendedName>
    <alternativeName>
        <fullName evidence="2">30S ribosomal protein S6</fullName>
    </alternativeName>
</protein>
<name>RS6_STRPJ</name>
<feature type="chain" id="PRO_1000133547" description="Small ribosomal subunit protein bS6">
    <location>
        <begin position="1"/>
        <end position="96"/>
    </location>
</feature>
<comment type="function">
    <text evidence="1">Binds together with bS18 to 16S ribosomal RNA.</text>
</comment>
<comment type="similarity">
    <text evidence="1">Belongs to the bacterial ribosomal protein bS6 family.</text>
</comment>
<gene>
    <name evidence="1" type="primary">rpsF</name>
    <name type="ordered locus">SPN23F15040</name>
</gene>
<proteinExistence type="inferred from homology"/>
<keyword id="KW-0687">Ribonucleoprotein</keyword>
<keyword id="KW-0689">Ribosomal protein</keyword>
<keyword id="KW-0694">RNA-binding</keyword>
<keyword id="KW-0699">rRNA-binding</keyword>
<reference key="1">
    <citation type="journal article" date="2009" name="J. Bacteriol.">
        <title>Role of conjugative elements in the evolution of the multidrug-resistant pandemic clone Streptococcus pneumoniae Spain23F ST81.</title>
        <authorList>
            <person name="Croucher N.J."/>
            <person name="Walker D."/>
            <person name="Romero P."/>
            <person name="Lennard N."/>
            <person name="Paterson G.K."/>
            <person name="Bason N.C."/>
            <person name="Mitchell A.M."/>
            <person name="Quail M.A."/>
            <person name="Andrew P.W."/>
            <person name="Parkhill J."/>
            <person name="Bentley S.D."/>
            <person name="Mitchell T.J."/>
        </authorList>
    </citation>
    <scope>NUCLEOTIDE SEQUENCE [LARGE SCALE GENOMIC DNA]</scope>
    <source>
        <strain>ATCC 700669 / Spain 23F-1</strain>
    </source>
</reference>
<sequence length="96" mass="11153">MAKYEILYIIRPNIEEEAKNALVARFDSILTDNGATVVESKTWEKRRLAYEIQDFREGLYHIVNVEANDDAALKEFDRLSKINADILRHMIVKIDA</sequence>